<accession>P11226</accession>
<accession>Q4VB12</accession>
<accession>Q4VB13</accession>
<accession>Q4VB14</accession>
<accession>Q5SQS3</accession>
<accession>Q86SI4</accession>
<accession>Q96KE4</accession>
<accession>Q96TF7</accession>
<accession>Q96TF8</accession>
<accession>Q96TF9</accession>
<organism>
    <name type="scientific">Homo sapiens</name>
    <name type="common">Human</name>
    <dbReference type="NCBI Taxonomy" id="9606"/>
    <lineage>
        <taxon>Eukaryota</taxon>
        <taxon>Metazoa</taxon>
        <taxon>Chordata</taxon>
        <taxon>Craniata</taxon>
        <taxon>Vertebrata</taxon>
        <taxon>Euteleostomi</taxon>
        <taxon>Mammalia</taxon>
        <taxon>Eutheria</taxon>
        <taxon>Euarchontoglires</taxon>
        <taxon>Primates</taxon>
        <taxon>Haplorrhini</taxon>
        <taxon>Catarrhini</taxon>
        <taxon>Hominidae</taxon>
        <taxon>Homo</taxon>
    </lineage>
</organism>
<comment type="function">
    <text evidence="7 16">Calcium-dependent lectin involved in innate immune defense (PubMed:35102342). Binds mannose, fucose and N-acetylglucosamine on different microorganisms and activates the lectin complement pathway. Binds to late apoptotic cells, as well as to apoptotic blebs and to necrotic cells, but not to early apoptotic cells, facilitating their uptake by macrophages. May bind DNA. Upon SARS coronavirus-2/SARS-CoV-2 infection, activates the complement lectin pathway which leads to the inhibition SARS-CoV-2 infection and a reduction of the induced inflammatory response (PubMed:35102342).</text>
</comment>
<comment type="subunit">
    <text evidence="10 14 15 17 19">Oligomeric complex of 3 or more homotrimers. Interacts with MASP1 and MASP2. Interacts with MEP1A and MEP1B and may inhibit their catalytic activity. Interacts with CR1 (via Sushi 24 and Sushi 25 domains).</text>
</comment>
<comment type="subunit">
    <text evidence="16">(Microbial infection) Interacts with SARS coronavirus-2/SARS-CoV-2 Spike glycoprotein homotrimer; the interaction is calcium-dependent and modulated by Spike glycoprotein glycosylation state.</text>
</comment>
<comment type="interaction">
    <interactant intactId="EBI-5325353">
        <id>P11226</id>
    </interactant>
    <interactant intactId="EBI-2115799">
        <id>P02743</id>
        <label>APCS</label>
    </interactant>
    <organismsDiffer>false</organismsDiffer>
    <experiments>2</experiments>
</comment>
<comment type="interaction">
    <interactant intactId="EBI-5325353">
        <id>P11226</id>
    </interactant>
    <interactant intactId="EBI-2114682">
        <id>P02749</id>
        <label>APOH</label>
    </interactant>
    <organismsDiffer>false</organismsDiffer>
    <experiments>3</experiments>
</comment>
<comment type="interaction">
    <interactant intactId="EBI-5325353">
        <id>P11226</id>
    </interactant>
    <interactant intactId="EBI-1049597">
        <id>P27797</id>
        <label>CALR</label>
    </interactant>
    <organismsDiffer>false</organismsDiffer>
    <experiments>6</experiments>
</comment>
<comment type="interaction">
    <interactant intactId="EBI-5325353">
        <id>P11226</id>
    </interactant>
    <interactant intactId="EBI-2807625">
        <id>P17927</id>
        <label>CR1</label>
    </interactant>
    <organismsDiffer>false</organismsDiffer>
    <experiments>8</experiments>
</comment>
<comment type="interaction">
    <interactant intactId="EBI-5325353">
        <id>P11226</id>
    </interactant>
    <interactant intactId="EBI-1044970">
        <id>Q9UGM3</id>
        <label>DMBT1</label>
    </interactant>
    <organismsDiffer>false</organismsDiffer>
    <experiments>2</experiments>
</comment>
<comment type="interaction">
    <interactant intactId="EBI-5325353">
        <id>P11226</id>
    </interactant>
    <interactant intactId="EBI-1046087">
        <id>Q07954</id>
        <label>LRP1</label>
    </interactant>
    <organismsDiffer>false</organismsDiffer>
    <experiments>5</experiments>
</comment>
<comment type="interaction">
    <interactant intactId="EBI-5325353">
        <id>P11226</id>
    </interactant>
    <interactant intactId="EBI-6380536">
        <id>P48740</id>
        <label>MASP1</label>
    </interactant>
    <organismsDiffer>false</organismsDiffer>
    <experiments>3</experiments>
</comment>
<comment type="interaction">
    <interactant intactId="EBI-5325353">
        <id>P11226</id>
    </interactant>
    <interactant intactId="EBI-16138717">
        <id>P48740-1</id>
        <label>MASP1</label>
    </interactant>
    <organismsDiffer>false</organismsDiffer>
    <experiments>9</experiments>
</comment>
<comment type="interaction">
    <interactant intactId="EBI-5325353">
        <id>P11226</id>
    </interactant>
    <interactant intactId="EBI-26435098">
        <id>P48740-2</id>
        <label>MASP1</label>
    </interactant>
    <organismsDiffer>false</organismsDiffer>
    <experiments>12</experiments>
</comment>
<comment type="interaction">
    <interactant intactId="EBI-5325353">
        <id>P11226</id>
    </interactant>
    <interactant intactId="EBI-26435118">
        <id>P48740-3</id>
        <label>MASP1</label>
    </interactant>
    <organismsDiffer>false</organismsDiffer>
    <experiments>7</experiments>
</comment>
<comment type="interaction">
    <interactant intactId="EBI-5325353">
        <id>P11226</id>
    </interactant>
    <interactant intactId="EBI-26356151">
        <id>PRO_0000027592</id>
        <label>MASP1</label>
        <dbReference type="UniProtKB" id="P48740"/>
    </interactant>
    <organismsDiffer>false</organismsDiffer>
    <experiments>2</experiments>
</comment>
<comment type="interaction">
    <interactant intactId="EBI-5325353">
        <id>P11226</id>
    </interactant>
    <interactant intactId="EBI-7965040">
        <id>O00187</id>
        <label>MASP2</label>
    </interactant>
    <organismsDiffer>false</organismsDiffer>
    <experiments>6</experiments>
</comment>
<comment type="interaction">
    <interactant intactId="EBI-5325353">
        <id>P11226</id>
    </interactant>
    <interactant intactId="EBI-26356134">
        <id>O00187-2</id>
        <label>MASP2</label>
    </interactant>
    <organismsDiffer>false</organismsDiffer>
    <experiments>5</experiments>
</comment>
<comment type="interaction">
    <interactant intactId="EBI-5325353">
        <id>P11226</id>
    </interactant>
    <interactant intactId="EBI-25426044">
        <id>PRO_0000027598</id>
        <label>MASP2</label>
        <dbReference type="UniProtKB" id="O00187"/>
    </interactant>
    <organismsDiffer>false</organismsDiffer>
    <experiments>2</experiments>
</comment>
<comment type="interaction">
    <interactant intactId="EBI-5325353">
        <id>P11226</id>
    </interactant>
    <interactant intactId="EBI-5325353">
        <id>P11226</id>
        <label>MBL2</label>
    </interactant>
    <organismsDiffer>false</organismsDiffer>
    <experiments>8</experiments>
</comment>
<comment type="interaction">
    <interactant intactId="EBI-5325353">
        <id>P11226</id>
    </interactant>
    <interactant intactId="EBI-744915">
        <id>P10124</id>
        <label>SRGN</label>
    </interactant>
    <organismsDiffer>false</organismsDiffer>
    <experiments>4</experiments>
</comment>
<comment type="interaction">
    <interactant intactId="EBI-5325353">
        <id>P11226</id>
    </interactant>
    <interactant intactId="EBI-528701">
        <id>O00206</id>
        <label>TLR4</label>
    </interactant>
    <organismsDiffer>false</organismsDiffer>
    <experiments>2</experiments>
</comment>
<comment type="interaction">
    <interactant intactId="EBI-5325353">
        <id>P11226</id>
    </interactant>
    <interactant intactId="EBI-2876757">
        <id>O75648</id>
        <label>TRMU</label>
    </interactant>
    <organismsDiffer>false</organismsDiffer>
    <experiments>3</experiments>
</comment>
<comment type="interaction">
    <interactant intactId="EBI-5325353">
        <id>P11226</id>
    </interactant>
    <interactant intactId="EBI-947187">
        <id>Q9UHD9</id>
        <label>UBQLN2</label>
    </interactant>
    <organismsDiffer>false</organismsDiffer>
    <experiments>5</experiments>
</comment>
<comment type="interaction">
    <interactant intactId="EBI-5325353">
        <id>P11226</id>
    </interactant>
    <interactant intactId="EBI-6904269">
        <id>PRO_0000037570</id>
        <dbReference type="UniProtKB" id="P27958"/>
    </interactant>
    <organismsDiffer>true</organismsDiffer>
    <experiments>6</experiments>
</comment>
<comment type="interaction">
    <interactant intactId="EBI-25427940">
        <id>PRO_0000017401</id>
    </interactant>
    <interactant intactId="EBI-26878164">
        <id>PRO_0000000214</id>
        <label>fbpA</label>
        <dbReference type="UniProtKB" id="P9WQP3"/>
    </interactant>
    <organismsDiffer>true</organismsDiffer>
    <experiments>2</experiments>
</comment>
<comment type="interaction">
    <interactant intactId="EBI-25427940">
        <id>PRO_0000017401</id>
    </interactant>
    <interactant intactId="EBI-26878221">
        <id>P9WQP1</id>
        <label>fbpB</label>
    </interactant>
    <organismsDiffer>true</organismsDiffer>
    <experiments>2</experiments>
</comment>
<comment type="interaction">
    <interactant intactId="EBI-25427940">
        <id>PRO_0000017401</id>
    </interactant>
    <interactant intactId="EBI-25474821">
        <id>P0DTC2</id>
        <label>S</label>
    </interactant>
    <organismsDiffer>true</organismsDiffer>
    <experiments>11</experiments>
</comment>
<comment type="subcellular location">
    <subcellularLocation>
        <location evidence="18">Secreted</location>
    </subcellularLocation>
</comment>
<comment type="tissue specificity">
    <text evidence="12">Plasma protein produced mainly in the liver.</text>
</comment>
<comment type="domain">
    <text>The coiled-coil domain mediates trimerization.</text>
</comment>
<comment type="polymorphism">
    <text evidence="9">Genetic variations in MBL2 influence susceptibility to hepatitis B virus (HBV) infection [MIM:610424].</text>
</comment>
<comment type="polymorphism">
    <text evidence="16">Genetic variations in MBL2 may influence susceptibility to severe COVID-19 disease caused by SARS-CoV-2 virus infection.</text>
</comment>
<comment type="polymorphism">
    <text evidence="11 13">Genetic variations in MBL2 are responsible for mannose-binding protein deficiency [MIM:614372]. This condition is defined as MBL2 protein level of less than 100 ng/ml, is present in about 5% of people of European descent and in about 10% of sub-Saharan Africans. Most MBL2-deficient adults appear healthy, but low levels of MBL2 are associated with increased risk of infection in toddlers, in cancer patients undergoing chemotherapy, and in organ-transplant patients receiving immunosuppressive drugs, particularly recipients of liver transplants. There is an association between low levels of MBL2 and a defect of opsonization which results in susceptibility to frequent and chronic infections (PubMed:1675710). Functional MBL2 deficiency may be associated with protection against tuberculosis caused by Mycobacterium africanum but not by Mycobacterium tuberculosis, as observed in studies on Ghanaian patients with pulmonary tuberculosis (PubMed:21695215).</text>
</comment>
<comment type="online information" name="Functional Glycomics Gateway - Glycan Binding">
    <link uri="http://www.functionalglycomics.org/glycomics/GBPServlet?&amp;operationType=view&amp;cbpId=cbp_hum_Ctlect_227"/>
    <text>Mannose-binding protein</text>
</comment>
<name>MBL2_HUMAN</name>
<feature type="signal peptide" evidence="18">
    <location>
        <begin position="1"/>
        <end position="20"/>
    </location>
</feature>
<feature type="chain" id="PRO_0000017401" description="Mannose-binding protein C">
    <location>
        <begin position="21"/>
        <end position="248"/>
    </location>
</feature>
<feature type="domain" description="Collagen-like">
    <location>
        <begin position="42"/>
        <end position="99"/>
    </location>
</feature>
<feature type="domain" description="C-type lectin" evidence="1">
    <location>
        <begin position="134"/>
        <end position="245"/>
    </location>
</feature>
<feature type="region of interest" description="Disordered" evidence="2">
    <location>
        <begin position="43"/>
        <end position="113"/>
    </location>
</feature>
<feature type="coiled-coil region" evidence="17">
    <location>
        <begin position="112"/>
        <end position="130"/>
    </location>
</feature>
<feature type="compositionally biased region" description="Basic and acidic residues" evidence="2">
    <location>
        <begin position="49"/>
        <end position="61"/>
    </location>
</feature>
<feature type="compositionally biased region" description="Pro residues" evidence="2">
    <location>
        <begin position="75"/>
        <end position="87"/>
    </location>
</feature>
<feature type="compositionally biased region" description="Basic and acidic residues" evidence="2">
    <location>
        <begin position="93"/>
        <end position="102"/>
    </location>
</feature>
<feature type="modified residue" description="Hydroxyproline" evidence="18">
    <location>
        <position position="47"/>
    </location>
</feature>
<feature type="modified residue" description="Hydroxyproline" evidence="18">
    <location>
        <position position="73"/>
    </location>
</feature>
<feature type="modified residue" description="Hydroxyproline" evidence="18">
    <location>
        <position position="79"/>
    </location>
</feature>
<feature type="modified residue" description="Hydroxyproline" evidence="18">
    <location>
        <position position="82"/>
    </location>
</feature>
<feature type="modified residue" description="Hydroxyproline" evidence="18">
    <location>
        <position position="88"/>
    </location>
</feature>
<feature type="disulfide bond">
    <location>
        <begin position="155"/>
        <end position="244"/>
    </location>
</feature>
<feature type="disulfide bond">
    <location>
        <begin position="222"/>
        <end position="236"/>
    </location>
</feature>
<feature type="sequence variant" id="VAR_013294" description="In Chinese." evidence="21">
    <original>T</original>
    <variation>A</variation>
    <location>
        <position position="24"/>
    </location>
</feature>
<feature type="sequence variant" id="VAR_008543" description="In 0.05% of European and African populations; dbSNP:rs5030737." evidence="3 9 20">
    <original>R</original>
    <variation>C</variation>
    <location>
        <position position="52"/>
    </location>
</feature>
<feature type="sequence variant" id="VAR_004182" description="Correlated with low serum mannose-binding protein (MBP) concentrations and recurrent infections; dbSNP:rs1800450." evidence="3 4 5 6 8 9 11 20">
    <original>G</original>
    <variation>D</variation>
    <location>
        <position position="54"/>
    </location>
</feature>
<feature type="sequence variant" id="VAR_004183" description="Protective factor against tuberculosis caused by Mycobacterium africanum; correlated with low serum mannose-binding protein (MBP) concentrations; dbSNP:rs1800451." evidence="3 6 9 13 20">
    <original>G</original>
    <variation>E</variation>
    <location>
        <position position="57"/>
    </location>
</feature>
<feature type="sequence variant" id="VAR_050119" description="In dbSNP:rs12260094.">
    <original>N</original>
    <variation>Y</variation>
    <location>
        <position position="214"/>
    </location>
</feature>
<feature type="helix" evidence="24">
    <location>
        <begin position="110"/>
        <end position="129"/>
    </location>
</feature>
<feature type="strand" evidence="24">
    <location>
        <begin position="131"/>
        <end position="134"/>
    </location>
</feature>
<feature type="strand" evidence="24">
    <location>
        <begin position="137"/>
        <end position="147"/>
    </location>
</feature>
<feature type="helix" evidence="24">
    <location>
        <begin position="148"/>
        <end position="157"/>
    </location>
</feature>
<feature type="helix" evidence="24">
    <location>
        <begin position="168"/>
        <end position="177"/>
    </location>
</feature>
<feature type="strand" evidence="24">
    <location>
        <begin position="182"/>
        <end position="187"/>
    </location>
</feature>
<feature type="strand" evidence="24">
    <location>
        <begin position="189"/>
        <end position="191"/>
    </location>
</feature>
<feature type="helix" evidence="24">
    <location>
        <begin position="216"/>
        <end position="218"/>
    </location>
</feature>
<feature type="strand" evidence="24">
    <location>
        <begin position="222"/>
        <end position="225"/>
    </location>
</feature>
<feature type="strand" evidence="24">
    <location>
        <begin position="231"/>
        <end position="234"/>
    </location>
</feature>
<feature type="strand" evidence="24">
    <location>
        <begin position="238"/>
        <end position="247"/>
    </location>
</feature>
<keyword id="KW-0002">3D-structure</keyword>
<keyword id="KW-0106">Calcium</keyword>
<keyword id="KW-0175">Coiled coil</keyword>
<keyword id="KW-0176">Collagen</keyword>
<keyword id="KW-1018">Complement activation lectin pathway</keyword>
<keyword id="KW-0180">Complement pathway</keyword>
<keyword id="KW-0903">Direct protein sequencing</keyword>
<keyword id="KW-1015">Disulfide bond</keyword>
<keyword id="KW-0379">Hydroxylation</keyword>
<keyword id="KW-0391">Immunity</keyword>
<keyword id="KW-0399">Innate immunity</keyword>
<keyword id="KW-0430">Lectin</keyword>
<keyword id="KW-0465">Mannose-binding</keyword>
<keyword id="KW-1267">Proteomics identification</keyword>
<keyword id="KW-1185">Reference proteome</keyword>
<keyword id="KW-0677">Repeat</keyword>
<keyword id="KW-0964">Secreted</keyword>
<keyword id="KW-0732">Signal</keyword>
<sequence length="248" mass="26144">MSLFPSLPLLLLSMVAASYSETVTCEDAQKTCPAVIACSSPGINGFPGKDGRDGTKGEKGEPGQGLRGLQGPPGKLGPPGNPGPSGSPGPKGQKGDPGKSPDGDSSLAASERKALQTEMARIKKWLTFSLGKQVGNKFFLTNGEIMTFEKVKALCVKFQASVATPRNAAENGAIQNLIKEEAFLGITDEKTEGQFVDLTGNRLTYTNWNEGEPNNAGSDEDCVLLLKNGQWNDVPCSTSHLAVCEFPI</sequence>
<reference key="1">
    <citation type="journal article" date="1988" name="J. Exp. Med.">
        <title>A human mannose-binding protein is an acute-phase reactant that shares sequence homology with other vertebrate lectins.</title>
        <authorList>
            <person name="Ezekowitz R.A.B."/>
            <person name="Day L.E."/>
            <person name="Herman G.A."/>
        </authorList>
    </citation>
    <scope>NUCLEOTIDE SEQUENCE [MRNA]</scope>
</reference>
<reference key="2">
    <citation type="journal article" date="1991" name="J. Exp. Med.">
        <authorList>
            <person name="Ezekowitz R.A.B."/>
            <person name="Day L.E."/>
            <person name="Herman G.A."/>
        </authorList>
    </citation>
    <scope>ERRATUM OF PUBMED:2450948</scope>
</reference>
<reference key="3">
    <citation type="journal article" date="1989" name="J. Exp. Med.">
        <title>The human mannose-binding protein gene. Exon structure reveals its evolutionary relationship to a human pulmonary surfactant gene and localization to chromosome 10.</title>
        <authorList>
            <person name="Sastry K."/>
            <person name="Herman G.A."/>
            <person name="Day L.E."/>
            <person name="Deignan E."/>
            <person name="Bruns G."/>
            <person name="Morton C.C."/>
            <person name="Ezekowitz R.A.B."/>
        </authorList>
    </citation>
    <scope>NUCLEOTIDE SEQUENCE [MRNA]</scope>
    <scope>SEQUENCE REVISION</scope>
    <source>
        <tissue>Liver</tissue>
    </source>
</reference>
<reference key="4">
    <citation type="journal article" date="1989" name="Biochem. J.">
        <title>Structure and evolutionary origin of the gene encoding a human serum mannose-binding protein.</title>
        <authorList>
            <person name="Taylor M.E."/>
            <person name="Brickell P.M."/>
            <person name="Craig R.K."/>
            <person name="Summerfield J.A."/>
        </authorList>
    </citation>
    <scope>NUCLEOTIDE SEQUENCE [GENOMIC DNA]</scope>
</reference>
<reference key="5">
    <citation type="journal article" date="1998" name="J. Immunol.">
        <title>Different molecular events result in low protein levels of mannan-binding lectin in populations from South-East Africa and South America.</title>
        <authorList>
            <person name="Madsen H.O."/>
            <person name="Satz M.L."/>
            <person name="Hogh B."/>
            <person name="Svejgaard A."/>
            <person name="Garred P."/>
        </authorList>
    </citation>
    <scope>NUCLEOTIDE SEQUENCE [GENOMIC DNA]</scope>
    <scope>VARIANTS CYS-52; ASP-54 AND GLU-57</scope>
</reference>
<reference key="6">
    <citation type="journal article" date="1999" name="Mian Yi Xue Za Zhi">
        <title>Cloning and sequencing of mannan-binding lectin cDNA of Chinese.</title>
        <authorList>
            <person name="Chen Z."/>
            <person name="Zhu X."/>
            <person name="Xie P."/>
        </authorList>
    </citation>
    <scope>NUCLEOTIDE SEQUENCE [MRNA]</scope>
    <scope>VARIANT ALA-24</scope>
    <source>
        <tissue>Liver</tissue>
    </source>
</reference>
<reference key="7">
    <citation type="submission" date="2004-11" db="EMBL/GenBank/DDBJ databases">
        <title>Prokaryotic expression of human mbl.</title>
        <authorList>
            <person name="Wu Z."/>
            <person name="Zhang S."/>
            <person name="Wang Y."/>
        </authorList>
    </citation>
    <scope>NUCLEOTIDE SEQUENCE [MRNA]</scope>
</reference>
<reference key="8">
    <citation type="submission" date="2005-09" db="EMBL/GenBank/DDBJ databases">
        <title>Genetic variation in immune response genes.</title>
        <authorList>
            <person name="Tan J."/>
            <person name="Ong R."/>
            <person name="Hibberd M.L."/>
            <person name="Seielstad M."/>
        </authorList>
    </citation>
    <scope>NUCLEOTIDE SEQUENCE [GENOMIC DNA]</scope>
</reference>
<reference key="9">
    <citation type="submission" date="2008-03" db="EMBL/GenBank/DDBJ databases">
        <title>Cloning and sequencing of mannan-binding lectin gene from chinese Han people.</title>
        <authorList>
            <person name="Lai Q."/>
            <person name="Zuo D."/>
            <person name="Chen Z."/>
        </authorList>
    </citation>
    <scope>NUCLEOTIDE SEQUENCE [GENOMIC DNA]</scope>
</reference>
<reference key="10">
    <citation type="submission" date="2005-07" db="EMBL/GenBank/DDBJ databases">
        <authorList>
            <person name="Mural R.J."/>
            <person name="Istrail S."/>
            <person name="Sutton G."/>
            <person name="Florea L."/>
            <person name="Halpern A.L."/>
            <person name="Mobarry C.M."/>
            <person name="Lippert R."/>
            <person name="Walenz B."/>
            <person name="Shatkay H."/>
            <person name="Dew I."/>
            <person name="Miller J.R."/>
            <person name="Flanigan M.J."/>
            <person name="Edwards N.J."/>
            <person name="Bolanos R."/>
            <person name="Fasulo D."/>
            <person name="Halldorsson B.V."/>
            <person name="Hannenhalli S."/>
            <person name="Turner R."/>
            <person name="Yooseph S."/>
            <person name="Lu F."/>
            <person name="Nusskern D.R."/>
            <person name="Shue B.C."/>
            <person name="Zheng X.H."/>
            <person name="Zhong F."/>
            <person name="Delcher A.L."/>
            <person name="Huson D.H."/>
            <person name="Kravitz S.A."/>
            <person name="Mouchard L."/>
            <person name="Reinert K."/>
            <person name="Remington K.A."/>
            <person name="Clark A.G."/>
            <person name="Waterman M.S."/>
            <person name="Eichler E.E."/>
            <person name="Adams M.D."/>
            <person name="Hunkapiller M.W."/>
            <person name="Myers E.W."/>
            <person name="Venter J.C."/>
        </authorList>
    </citation>
    <scope>NUCLEOTIDE SEQUENCE [LARGE SCALE GENOMIC DNA]</scope>
</reference>
<reference key="11">
    <citation type="journal article" date="2004" name="Genome Res.">
        <title>The status, quality, and expansion of the NIH full-length cDNA project: the Mammalian Gene Collection (MGC).</title>
        <authorList>
            <consortium name="The MGC Project Team"/>
        </authorList>
    </citation>
    <scope>NUCLEOTIDE SEQUENCE [LARGE SCALE MRNA]</scope>
    <scope>VARIANT ASP-54</scope>
</reference>
<reference key="12">
    <citation type="journal article" date="2002" name="Mutat. Res.">
        <title>Restricted polymorphisms of the mannose-binding lectin gene in a population of Papua New Guinea.</title>
        <authorList>
            <person name="Jueliger S."/>
            <person name="Kremsner P.G."/>
            <person name="Alpers M.P."/>
            <person name="Reeder J.C."/>
            <person name="Kun J.F.J."/>
        </authorList>
    </citation>
    <scope>NUCLEOTIDE SEQUENCE [GENOMIC DNA] OF 1-59</scope>
    <scope>VARIANT ASP-54</scope>
</reference>
<reference key="13">
    <citation type="journal article" date="1994" name="J. Biochem.">
        <title>Structure and function of mannan-binding proteins isolated from human liver and serum.</title>
        <authorList>
            <person name="Kurata H."/>
            <person name="Sannoh T."/>
            <person name="Kozutsumi Y."/>
            <person name="Yokota Y."/>
            <person name="Kawasaki T."/>
        </authorList>
    </citation>
    <scope>PROTEIN SEQUENCE OF 21-248</scope>
    <scope>SUBCELLULAR LOCATION</scope>
    <scope>HYDROXYLATION AT PRO-47; PRO-73; PRO-79; PRO-82 AND PRO-88</scope>
    <source>
        <tissue>Liver</tissue>
        <tissue>Plasma</tissue>
    </source>
</reference>
<reference key="14">
    <citation type="journal article" date="1997" name="Nature">
        <title>A second serine protease associated with mannan-binding lectin that activates complement.</title>
        <authorList>
            <person name="Thiel S."/>
            <person name="Vorup-Jensen T."/>
            <person name="Stover C.M."/>
            <person name="Schwaeble W.J."/>
            <person name="Laursen S.B."/>
            <person name="Poulsen K."/>
            <person name="Willis A.C."/>
            <person name="Eggleton P."/>
            <person name="Hansen S."/>
            <person name="Holmskov U."/>
            <person name="Reid K.B.M."/>
            <person name="Jensenius J.C."/>
        </authorList>
    </citation>
    <scope>INTERACTION WITH MASP1 AND MASP2</scope>
</reference>
<reference key="15">
    <citation type="journal article" date="2003" name="Eur. J. Immunol.">
        <title>Mannose-binding lectin engagement with late apoptotic and necrotic cells.</title>
        <authorList>
            <person name="Nauta A.J."/>
            <person name="Raaschou-Jensen N."/>
            <person name="Roos A."/>
            <person name="Daha M.R."/>
            <person name="Madsen H.O."/>
            <person name="Borrias-Essers M.C."/>
            <person name="Ryder L.P."/>
            <person name="Koch C."/>
            <person name="Garred P."/>
        </authorList>
    </citation>
    <scope>FUNCTION</scope>
</reference>
<reference key="16">
    <citation type="journal article" date="2004" name="J. Biol. Chem.">
        <title>Nucleic acid is a novel ligand for innate, immune pattern recognition collectins surfactant proteins A and D and mannose-binding lectin.</title>
        <authorList>
            <person name="Palaniyar N."/>
            <person name="Nadesalingam J."/>
            <person name="Clark H."/>
            <person name="Shih M.J."/>
            <person name="Dodds A.W."/>
            <person name="Reid K.B.M."/>
        </authorList>
    </citation>
    <scope>DNA-BINDING</scope>
</reference>
<reference key="17">
    <citation type="journal article" date="2005" name="J. Immunol.">
        <title>Mannan-binding protein blocks the activation of metalloproteases meprin alpha and beta.</title>
        <authorList>
            <person name="Hirano M."/>
            <person name="Ma B.Y."/>
            <person name="Kawasaki N."/>
            <person name="Okimura K."/>
            <person name="Baba M."/>
            <person name="Nakagawa T."/>
            <person name="Miwa K."/>
            <person name="Kawasaki N."/>
            <person name="Oka S."/>
            <person name="Kawasaki T."/>
        </authorList>
    </citation>
    <scope>INTERACTION WITH MEP1A AND MEP1B</scope>
</reference>
<reference key="18">
    <citation type="journal article" date="2008" name="Mol. Immunol.">
        <title>Comparative study of the human ficolins reveals unique features of Ficolin-3 (Hakata antigen).</title>
        <authorList>
            <person name="Hummelshoej T."/>
            <person name="Fog L.M."/>
            <person name="Madsen H.O."/>
            <person name="Sim R.B."/>
            <person name="Garred P."/>
        </authorList>
    </citation>
    <scope>TISSUE SPECIFICITY</scope>
</reference>
<reference key="19">
    <citation type="journal article" date="2013" name="J. Immunol.">
        <title>Deciphering complement receptor type 1 interactions with recognition proteins of the lectin complement pathway.</title>
        <authorList>
            <person name="Jacquet M."/>
            <person name="Lacroix M."/>
            <person name="Ancelet S."/>
            <person name="Gout E."/>
            <person name="Gaboriaud C."/>
            <person name="Thielens N.M."/>
            <person name="Rossi V."/>
        </authorList>
    </citation>
    <scope>INTERACTION WITH CR1</scope>
</reference>
<reference key="20">
    <citation type="journal article" date="2014" name="J. Proteomics">
        <title>An enzyme assisted RP-RPLC approach for in-depth analysis of human liver phosphoproteome.</title>
        <authorList>
            <person name="Bian Y."/>
            <person name="Song C."/>
            <person name="Cheng K."/>
            <person name="Dong M."/>
            <person name="Wang F."/>
            <person name="Huang J."/>
            <person name="Sun D."/>
            <person name="Wang L."/>
            <person name="Ye M."/>
            <person name="Zou H."/>
        </authorList>
    </citation>
    <scope>IDENTIFICATION BY MASS SPECTROMETRY [LARGE SCALE ANALYSIS]</scope>
    <source>
        <tissue>Liver</tissue>
    </source>
</reference>
<reference key="21">
    <citation type="journal article" date="2018" name="Front. Immunol.">
        <title>C1q and Mannose-Binding Lectin Interact with CR1 in the Same Region on CCP24-25 Modules.</title>
        <authorList>
            <person name="Jacquet M."/>
            <person name="Cioci G."/>
            <person name="Fouet G."/>
            <person name="Bally I."/>
            <person name="Thielens N.M."/>
            <person name="Gaboriaud C."/>
            <person name="Rossi V."/>
        </authorList>
    </citation>
    <scope>INTERACTION WITH CR1</scope>
</reference>
<reference key="22">
    <citation type="journal article" date="2022" name="Nat. Immunol.">
        <title>Recognition and inhibition of SARS-CoV-2 by humoral innate immunity pattern recognition molecules.</title>
        <authorList>
            <person name="Stravalaci M."/>
            <person name="Pagani I."/>
            <person name="Paraboschi E.M."/>
            <person name="Pedotti M."/>
            <person name="Doni A."/>
            <person name="Scavello F."/>
            <person name="Mapelli S.N."/>
            <person name="Sironi M."/>
            <person name="Perucchini C."/>
            <person name="Varani L."/>
            <person name="Matkovic M."/>
            <person name="Cavalli A."/>
            <person name="Cesana D."/>
            <person name="Gallina P."/>
            <person name="Pedemonte N."/>
            <person name="Capurro V."/>
            <person name="Clementi N."/>
            <person name="Mancini N."/>
            <person name="Invernizzi P."/>
            <person name="Bayarri-Olmos R."/>
            <person name="Garred P."/>
            <person name="Rappuoli R."/>
            <person name="Duga S."/>
            <person name="Bottazzi B."/>
            <person name="Uguccioni M."/>
            <person name="Asselta R."/>
            <person name="Vicenzi E."/>
            <person name="Mantovani A."/>
            <person name="Garlanda C."/>
        </authorList>
    </citation>
    <scope>INTERACTION WITH SARS-COV-2 SPIKE GLYCOPROTEIN (MICROBIAL FUNCTION)</scope>
    <scope>FUNCTION</scope>
    <scope>POLYMORPHISM</scope>
</reference>
<reference key="23">
    <citation type="journal article" date="1994" name="Nat. Struct. Biol.">
        <title>Human mannose-binding protein carbohydrate recognition domain trimerizes through a triple alpha-helical coiled-coil.</title>
        <authorList>
            <person name="Sheriff S."/>
            <person name="Chang C.Y."/>
            <person name="Ezekowitz R.A."/>
        </authorList>
    </citation>
    <scope>X-RAY CRYSTALLOGRAPHY (2.5 ANGSTROMS) OF 108-248</scope>
    <scope>SUBUNIT</scope>
    <scope>COILED-COIL</scope>
</reference>
<reference key="24">
    <citation type="journal article" date="1991" name="Lancet">
        <title>Molecular basis of opsonic defect in immunodeficient children.</title>
        <authorList>
            <person name="Sumiya M."/>
            <person name="Super M."/>
            <person name="Tabona P."/>
            <person name="Levinsky R.J."/>
            <person name="Arai T."/>
            <person name="Turner M.W."/>
            <person name="Summerfield J.A."/>
        </authorList>
    </citation>
    <scope>VARIANT ASP-54</scope>
    <scope>ASSOCIATION WITH MANNOSE-BINDING PROTEIN DEFICIENCY AND SUSCEPTIBILITY TO CHRONIC INFECTIONS</scope>
</reference>
<reference key="25">
    <citation type="journal article" date="1992" name="Hum. Mol. Genet.">
        <title>High frequencies in African and non-African populations of independent mutations in the mannose binding protein gene.</title>
        <authorList>
            <person name="Lipscombe R.J."/>
            <person name="Sumiya M."/>
            <person name="Hill A.V.S."/>
            <person name="Lau Y.L."/>
            <person name="Levinsky R.J."/>
            <person name="Summerfield J.A."/>
            <person name="Turner M.W."/>
        </authorList>
    </citation>
    <scope>VARIANTS ASP-54 AND GLU-57</scope>
    <scope>ASSOCIATION WITH MANNOSE-BINDING PROTEIN DEFICIENCY</scope>
</reference>
<reference key="26">
    <citation type="journal article" date="1993" name="Hum. Mol. Genet.">
        <authorList>
            <person name="Lipscombe R.J."/>
            <person name="Sumiya M."/>
            <person name="Hill A.V.S."/>
            <person name="Lau Y.L."/>
            <person name="Levinsky R.J."/>
            <person name="Summerfield J.A."/>
            <person name="Turner M.W."/>
        </authorList>
    </citation>
    <scope>ERRATUM OF PUBMED:1304173</scope>
</reference>
<reference key="27">
    <citation type="journal article" date="1992" name="Nat. Genet.">
        <title>Distinct and overlapping functions of allelic forms of human mannose binding protein.</title>
        <authorList>
            <person name="Super M."/>
            <person name="Gillies S.D."/>
            <person name="Foley S."/>
            <person name="Sastry K."/>
            <person name="Schweinle J.E."/>
            <person name="Silverman V.J."/>
            <person name="Ezekowitz R.A."/>
        </authorList>
    </citation>
    <scope>VARIANT ASP-54</scope>
</reference>
<reference key="28">
    <citation type="journal article" date="1999" name="Hum. Mutat.">
        <title>Genotyping of the three major allelic variants of the human mannose-binding lectin gene by denaturing gradient gel electrophoresis.</title>
        <authorList>
            <person name="Gabolde M."/>
            <person name="Muralitharan S."/>
            <person name="Besmond C."/>
        </authorList>
    </citation>
    <scope>VARIANTS CYS-52; ASP-54 AND GLU-57</scope>
</reference>
<reference key="29">
    <citation type="journal article" date="2005" name="J. Virol.">
        <title>Mannose binding lectin genotypes influence recovery from hepatitis B virus infection.</title>
        <authorList>
            <person name="Thio C.L."/>
            <person name="Mosbruger T."/>
            <person name="Astemborski J."/>
            <person name="Greer S."/>
            <person name="Kirk G.D."/>
            <person name="O'Brien S.J."/>
            <person name="Thomas D.L."/>
        </authorList>
    </citation>
    <scope>INVOLVEMENT IN SUSCEPTIBILITY TO HBV INFECTION</scope>
    <scope>VARIANTS CYS-52; ASP-54 AND GLU-57</scope>
</reference>
<reference key="30">
    <citation type="journal article" date="2011" name="PLoS ONE">
        <title>Variant G57E of mannose binding lectin associated with protection against tuberculosis caused by Mycobacterium africanum but not by M. tuberculosis.</title>
        <authorList>
            <person name="Thye T."/>
            <person name="Niemann S."/>
            <person name="Walter K."/>
            <person name="Homolka S."/>
            <person name="Intemann C.D."/>
            <person name="Chinbuah M.A."/>
            <person name="Enimil A."/>
            <person name="Gyapong J."/>
            <person name="Osei I."/>
            <person name="Owusu-Dabo E."/>
            <person name="Rusch-Gerdes S."/>
            <person name="Horstmann R.D."/>
            <person name="Ehlers S."/>
            <person name="Meyer C.G."/>
        </authorList>
    </citation>
    <scope>VARIANT GLU-57</scope>
    <scope>ASSOCIATION WITH PROTECTION AGAINST TUBERCULOSIS</scope>
</reference>
<gene>
    <name evidence="23" type="primary">MBL2</name>
    <name type="synonym">COLEC1</name>
    <name type="synonym">MBL</name>
</gene>
<proteinExistence type="evidence at protein level"/>
<evidence type="ECO:0000255" key="1">
    <source>
        <dbReference type="PROSITE-ProRule" id="PRU00040"/>
    </source>
</evidence>
<evidence type="ECO:0000256" key="2">
    <source>
        <dbReference type="SAM" id="MobiDB-lite"/>
    </source>
</evidence>
<evidence type="ECO:0000269" key="3">
    <source>
    </source>
</evidence>
<evidence type="ECO:0000269" key="4">
    <source>
    </source>
</evidence>
<evidence type="ECO:0000269" key="5">
    <source>
    </source>
</evidence>
<evidence type="ECO:0000269" key="6">
    <source>
    </source>
</evidence>
<evidence type="ECO:0000269" key="7">
    <source>
    </source>
</evidence>
<evidence type="ECO:0000269" key="8">
    <source>
    </source>
</evidence>
<evidence type="ECO:0000269" key="9">
    <source>
    </source>
</evidence>
<evidence type="ECO:0000269" key="10">
    <source>
    </source>
</evidence>
<evidence type="ECO:0000269" key="11">
    <source>
    </source>
</evidence>
<evidence type="ECO:0000269" key="12">
    <source>
    </source>
</evidence>
<evidence type="ECO:0000269" key="13">
    <source>
    </source>
</evidence>
<evidence type="ECO:0000269" key="14">
    <source>
    </source>
</evidence>
<evidence type="ECO:0000269" key="15">
    <source>
    </source>
</evidence>
<evidence type="ECO:0000269" key="16">
    <source>
    </source>
</evidence>
<evidence type="ECO:0000269" key="17">
    <source>
    </source>
</evidence>
<evidence type="ECO:0000269" key="18">
    <source>
    </source>
</evidence>
<evidence type="ECO:0000269" key="19">
    <source>
    </source>
</evidence>
<evidence type="ECO:0000269" key="20">
    <source>
    </source>
</evidence>
<evidence type="ECO:0000269" key="21">
    <source ref="6"/>
</evidence>
<evidence type="ECO:0000305" key="22"/>
<evidence type="ECO:0000312" key="23">
    <source>
        <dbReference type="HGNC" id="HGNC:6922"/>
    </source>
</evidence>
<evidence type="ECO:0007829" key="24">
    <source>
        <dbReference type="PDB" id="1HUP"/>
    </source>
</evidence>
<dbReference type="EMBL" id="X15422">
    <property type="protein sequence ID" value="CAA33462.1"/>
    <property type="molecule type" value="mRNA"/>
</dbReference>
<dbReference type="EMBL" id="X15954">
    <property type="protein sequence ID" value="CAA34079.1"/>
    <property type="molecule type" value="Genomic_DNA"/>
</dbReference>
<dbReference type="EMBL" id="X15955">
    <property type="protein sequence ID" value="CAA34079.1"/>
    <property type="status" value="JOINED"/>
    <property type="molecule type" value="Genomic_DNA"/>
</dbReference>
<dbReference type="EMBL" id="X15956">
    <property type="protein sequence ID" value="CAA34079.1"/>
    <property type="status" value="JOINED"/>
    <property type="molecule type" value="Genomic_DNA"/>
</dbReference>
<dbReference type="EMBL" id="X15957">
    <property type="protein sequence ID" value="CAA34079.1"/>
    <property type="status" value="JOINED"/>
    <property type="molecule type" value="Genomic_DNA"/>
</dbReference>
<dbReference type="EMBL" id="AF080510">
    <property type="protein sequence ID" value="AAC31937.1"/>
    <property type="molecule type" value="Genomic_DNA"/>
</dbReference>
<dbReference type="EMBL" id="AF080508">
    <property type="protein sequence ID" value="AAC31937.1"/>
    <property type="status" value="JOINED"/>
    <property type="molecule type" value="Genomic_DNA"/>
</dbReference>
<dbReference type="EMBL" id="AF080509">
    <property type="protein sequence ID" value="AAC31937.1"/>
    <property type="status" value="JOINED"/>
    <property type="molecule type" value="Genomic_DNA"/>
</dbReference>
<dbReference type="EMBL" id="Y16576">
    <property type="protein sequence ID" value="CAB56044.1"/>
    <property type="molecule type" value="Genomic_DNA"/>
</dbReference>
<dbReference type="EMBL" id="Y16577">
    <property type="protein sequence ID" value="CAB56120.1"/>
    <property type="molecule type" value="Genomic_DNA"/>
</dbReference>
<dbReference type="EMBL" id="Y16578">
    <property type="protein sequence ID" value="CAB56045.1"/>
    <property type="molecule type" value="Genomic_DNA"/>
</dbReference>
<dbReference type="EMBL" id="Y16579">
    <property type="protein sequence ID" value="CAB56121.1"/>
    <property type="molecule type" value="Genomic_DNA"/>
</dbReference>
<dbReference type="EMBL" id="Y16580">
    <property type="protein sequence ID" value="CAB56122.1"/>
    <property type="molecule type" value="Genomic_DNA"/>
</dbReference>
<dbReference type="EMBL" id="Y16581">
    <property type="protein sequence ID" value="CAB56123.1"/>
    <property type="molecule type" value="Genomic_DNA"/>
</dbReference>
<dbReference type="EMBL" id="Y16582">
    <property type="protein sequence ID" value="CAB56124.1"/>
    <property type="molecule type" value="Genomic_DNA"/>
</dbReference>
<dbReference type="EMBL" id="AF360991">
    <property type="protein sequence ID" value="AAK52907.1"/>
    <property type="molecule type" value="mRNA"/>
</dbReference>
<dbReference type="EMBL" id="AY826184">
    <property type="protein sequence ID" value="AAV80468.1"/>
    <property type="molecule type" value="mRNA"/>
</dbReference>
<dbReference type="EMBL" id="DQ217939">
    <property type="protein sequence ID" value="ABB01009.1"/>
    <property type="molecule type" value="Genomic_DNA"/>
</dbReference>
<dbReference type="EMBL" id="EU596574">
    <property type="protein sequence ID" value="ACC62880.1"/>
    <property type="molecule type" value="Genomic_DNA"/>
</dbReference>
<dbReference type="EMBL" id="CH471083">
    <property type="protein sequence ID" value="EAW54148.1"/>
    <property type="molecule type" value="Genomic_DNA"/>
</dbReference>
<dbReference type="EMBL" id="CH471083">
    <property type="protein sequence ID" value="EAW54149.1"/>
    <property type="molecule type" value="Genomic_DNA"/>
</dbReference>
<dbReference type="EMBL" id="BC096179">
    <property type="protein sequence ID" value="AAH96179.1"/>
    <property type="molecule type" value="mRNA"/>
</dbReference>
<dbReference type="EMBL" id="BC096180">
    <property type="protein sequence ID" value="AAH96180.3"/>
    <property type="molecule type" value="mRNA"/>
</dbReference>
<dbReference type="EMBL" id="BC069338">
    <property type="protein sequence ID" value="AAH69338.1"/>
    <property type="molecule type" value="mRNA"/>
</dbReference>
<dbReference type="EMBL" id="BC096181">
    <property type="protein sequence ID" value="AAH96181.3"/>
    <property type="molecule type" value="mRNA"/>
</dbReference>
<dbReference type="EMBL" id="BC096182">
    <property type="protein sequence ID" value="AAH96182.3"/>
    <property type="molecule type" value="mRNA"/>
</dbReference>
<dbReference type="EMBL" id="AF482699">
    <property type="protein sequence ID" value="AAN39274.1"/>
    <property type="molecule type" value="Genomic_DNA"/>
</dbReference>
<dbReference type="EMBL" id="AF482700">
    <property type="protein sequence ID" value="AAN39275.1"/>
    <property type="molecule type" value="Genomic_DNA"/>
</dbReference>
<dbReference type="CCDS" id="CCDS7247.1"/>
<dbReference type="PIR" id="JL0115">
    <property type="entry name" value="LNHUMC"/>
</dbReference>
<dbReference type="RefSeq" id="NP_000233.1">
    <property type="nucleotide sequence ID" value="NM_000242.3"/>
</dbReference>
<dbReference type="RefSeq" id="NP_001365302.1">
    <property type="nucleotide sequence ID" value="NM_001378373.1"/>
</dbReference>
<dbReference type="RefSeq" id="NP_001365303.1">
    <property type="nucleotide sequence ID" value="NM_001378374.1"/>
</dbReference>
<dbReference type="RefSeq" id="XP_006717924.1">
    <property type="nucleotide sequence ID" value="XM_006717861.3"/>
</dbReference>
<dbReference type="RefSeq" id="XP_011538118.1">
    <property type="nucleotide sequence ID" value="XM_011539816.2"/>
</dbReference>
<dbReference type="PDB" id="1HUP">
    <property type="method" value="X-ray"/>
    <property type="resolution" value="2.50 A"/>
    <property type="chains" value="A=108-248"/>
</dbReference>
<dbReference type="PDBsum" id="1HUP"/>
<dbReference type="SMR" id="P11226"/>
<dbReference type="BioGRID" id="110323">
    <property type="interactions" value="34"/>
</dbReference>
<dbReference type="ComplexPortal" id="CPX-6170">
    <property type="entry name" value="MBL2-MASP1 lectin-protease complex"/>
</dbReference>
<dbReference type="ComplexPortal" id="CPX-6203">
    <property type="entry name" value="MBL2-MASP2 lectin-protease complex"/>
</dbReference>
<dbReference type="CORUM" id="P11226"/>
<dbReference type="DIP" id="DIP-61381N"/>
<dbReference type="FunCoup" id="P11226">
    <property type="interactions" value="334"/>
</dbReference>
<dbReference type="IntAct" id="P11226">
    <property type="interactions" value="49"/>
</dbReference>
<dbReference type="MINT" id="P11226"/>
<dbReference type="STRING" id="9606.ENSP00000363079"/>
<dbReference type="ChEMBL" id="CHEMBL1795113"/>
<dbReference type="DrugBank" id="DB02837">
    <property type="generic name" value="4-(Hydrogen sulfate)-beta-D-galactopyranose"/>
</dbReference>
<dbReference type="DrugBank" id="DB03879">
    <property type="generic name" value="alpha-L-methyl-fucose"/>
</dbReference>
<dbReference type="DrugBank" id="DB04426">
    <property type="generic name" value="Alpha-Methyl-N-Acetyl-D-Glucosamine"/>
</dbReference>
<dbReference type="DrugBank" id="DB01979">
    <property type="generic name" value="Methyl alpha-D-mannoside"/>
</dbReference>
<dbReference type="DrugBank" id="DB03194">
    <property type="generic name" value="Methyl beta-L-fucopyranoside"/>
</dbReference>
<dbReference type="DrugBank" id="DB03721">
    <property type="generic name" value="N-acetyl-alpha-neuraminic acid"/>
</dbReference>
<dbReference type="DrugBank" id="DB01818">
    <property type="generic name" value="O3-Sulfonylgalactose"/>
</dbReference>
<dbReference type="UniLectin" id="P11226"/>
<dbReference type="GlyGen" id="P11226">
    <property type="glycosylation" value="1 site"/>
</dbReference>
<dbReference type="iPTMnet" id="P11226"/>
<dbReference type="PhosphoSitePlus" id="P11226"/>
<dbReference type="BioMuta" id="MBL2"/>
<dbReference type="DMDM" id="126676"/>
<dbReference type="CPTAC" id="non-CPTAC-2684"/>
<dbReference type="MassIVE" id="P11226"/>
<dbReference type="PaxDb" id="9606-ENSP00000363079"/>
<dbReference type="PeptideAtlas" id="P11226"/>
<dbReference type="ProteomicsDB" id="52723"/>
<dbReference type="TopDownProteomics" id="P11226"/>
<dbReference type="Antibodypedia" id="693">
    <property type="antibodies" value="750 antibodies from 39 providers"/>
</dbReference>
<dbReference type="DNASU" id="4153"/>
<dbReference type="Ensembl" id="ENST00000373968.3">
    <property type="protein sequence ID" value="ENSP00000363079.3"/>
    <property type="gene ID" value="ENSG00000165471.7"/>
</dbReference>
<dbReference type="Ensembl" id="ENST00000674931.1">
    <property type="protein sequence ID" value="ENSP00000502789.1"/>
    <property type="gene ID" value="ENSG00000165471.7"/>
</dbReference>
<dbReference type="Ensembl" id="ENST00000675947.1">
    <property type="protein sequence ID" value="ENSP00000502615.1"/>
    <property type="gene ID" value="ENSG00000165471.7"/>
</dbReference>
<dbReference type="GeneID" id="4153"/>
<dbReference type="KEGG" id="hsa:4153"/>
<dbReference type="MANE-Select" id="ENST00000674931.1">
    <property type="protein sequence ID" value="ENSP00000502789.1"/>
    <property type="RefSeq nucleotide sequence ID" value="NM_001378373.1"/>
    <property type="RefSeq protein sequence ID" value="NP_001365302.1"/>
</dbReference>
<dbReference type="UCSC" id="uc001jjt.3">
    <property type="organism name" value="human"/>
</dbReference>
<dbReference type="AGR" id="HGNC:6922"/>
<dbReference type="CTD" id="4153"/>
<dbReference type="DisGeNET" id="4153"/>
<dbReference type="GeneCards" id="MBL2"/>
<dbReference type="HGNC" id="HGNC:6922">
    <property type="gene designation" value="MBL2"/>
</dbReference>
<dbReference type="HPA" id="ENSG00000165471">
    <property type="expression patterns" value="Tissue enriched (liver)"/>
</dbReference>
<dbReference type="MalaCards" id="MBL2"/>
<dbReference type="MIM" id="154545">
    <property type="type" value="gene"/>
</dbReference>
<dbReference type="MIM" id="610424">
    <property type="type" value="phenotype"/>
</dbReference>
<dbReference type="MIM" id="614372">
    <property type="type" value="phenotype"/>
</dbReference>
<dbReference type="neXtProt" id="NX_P11226"/>
<dbReference type="OpenTargets" id="ENSG00000165471"/>
<dbReference type="PharmGKB" id="PA30665"/>
<dbReference type="VEuPathDB" id="HostDB:ENSG00000165471"/>
<dbReference type="eggNOG" id="KOG4297">
    <property type="taxonomic scope" value="Eukaryota"/>
</dbReference>
<dbReference type="GeneTree" id="ENSGT00940000154368"/>
<dbReference type="HOGENOM" id="CLU_049894_3_0_1"/>
<dbReference type="InParanoid" id="P11226"/>
<dbReference type="OMA" id="CAKFQAS"/>
<dbReference type="OrthoDB" id="10255512at2759"/>
<dbReference type="PAN-GO" id="P11226">
    <property type="GO annotations" value="2 GO annotations based on evolutionary models"/>
</dbReference>
<dbReference type="PhylomeDB" id="P11226"/>
<dbReference type="TreeFam" id="TF330481"/>
<dbReference type="PathwayCommons" id="P11226"/>
<dbReference type="Reactome" id="R-HSA-166662">
    <property type="pathway name" value="Lectin pathway of complement activation"/>
</dbReference>
<dbReference type="Reactome" id="R-HSA-166663">
    <property type="pathway name" value="Initial triggering of complement"/>
</dbReference>
<dbReference type="Reactome" id="R-HSA-9705671">
    <property type="pathway name" value="SARS-CoV-2 activates/modulates innate and adaptive immune responses"/>
</dbReference>
<dbReference type="SignaLink" id="P11226"/>
<dbReference type="SIGNOR" id="P11226"/>
<dbReference type="BioGRID-ORCS" id="4153">
    <property type="hits" value="9 hits in 1149 CRISPR screens"/>
</dbReference>
<dbReference type="EvolutionaryTrace" id="P11226"/>
<dbReference type="GeneWiki" id="Mannan-binding_lectin"/>
<dbReference type="GenomeRNAi" id="4153"/>
<dbReference type="Pharos" id="P11226">
    <property type="development level" value="Tbio"/>
</dbReference>
<dbReference type="PRO" id="PR:P11226"/>
<dbReference type="Proteomes" id="UP000005640">
    <property type="component" value="Chromosome 10"/>
</dbReference>
<dbReference type="RNAct" id="P11226">
    <property type="molecule type" value="protein"/>
</dbReference>
<dbReference type="Bgee" id="ENSG00000165471">
    <property type="expression patterns" value="Expressed in right lobe of liver and 13 other cell types or tissues"/>
</dbReference>
<dbReference type="GO" id="GO:0009986">
    <property type="term" value="C:cell surface"/>
    <property type="evidence" value="ECO:0000304"/>
    <property type="project" value="BHF-UCL"/>
</dbReference>
<dbReference type="GO" id="GO:0005581">
    <property type="term" value="C:collagen trimer"/>
    <property type="evidence" value="ECO:0007669"/>
    <property type="project" value="UniProtKB-KW"/>
</dbReference>
<dbReference type="GO" id="GO:0009897">
    <property type="term" value="C:external side of plasma membrane"/>
    <property type="evidence" value="ECO:0000303"/>
    <property type="project" value="ComplexPortal"/>
</dbReference>
<dbReference type="GO" id="GO:0005576">
    <property type="term" value="C:extracellular region"/>
    <property type="evidence" value="ECO:0000304"/>
    <property type="project" value="Reactome"/>
</dbReference>
<dbReference type="GO" id="GO:0005615">
    <property type="term" value="C:extracellular space"/>
    <property type="evidence" value="ECO:0000314"/>
    <property type="project" value="BHF-UCL"/>
</dbReference>
<dbReference type="GO" id="GO:0005771">
    <property type="term" value="C:multivesicular body"/>
    <property type="evidence" value="ECO:0000318"/>
    <property type="project" value="GO_Central"/>
</dbReference>
<dbReference type="GO" id="GO:1905370">
    <property type="term" value="C:serine-type endopeptidase complex"/>
    <property type="evidence" value="ECO:0000353"/>
    <property type="project" value="ComplexPortal"/>
</dbReference>
<dbReference type="GO" id="GO:0048306">
    <property type="term" value="F:calcium-dependent protein binding"/>
    <property type="evidence" value="ECO:0000353"/>
    <property type="project" value="UniProtKB"/>
</dbReference>
<dbReference type="GO" id="GO:0005537">
    <property type="term" value="F:D-mannose binding"/>
    <property type="evidence" value="ECO:0000314"/>
    <property type="project" value="BHF-UCL"/>
</dbReference>
<dbReference type="GO" id="GO:0042802">
    <property type="term" value="F:identical protein binding"/>
    <property type="evidence" value="ECO:0000353"/>
    <property type="project" value="IntAct"/>
</dbReference>
<dbReference type="GO" id="GO:0005102">
    <property type="term" value="F:signaling receptor binding"/>
    <property type="evidence" value="ECO:0000353"/>
    <property type="project" value="UniProtKB"/>
</dbReference>
<dbReference type="GO" id="GO:0006953">
    <property type="term" value="P:acute-phase response"/>
    <property type="evidence" value="ECO:0000304"/>
    <property type="project" value="BHF-UCL"/>
</dbReference>
<dbReference type="GO" id="GO:0140374">
    <property type="term" value="P:antiviral innate immune response"/>
    <property type="evidence" value="ECO:0000314"/>
    <property type="project" value="UniProtKB"/>
</dbReference>
<dbReference type="GO" id="GO:0002752">
    <property type="term" value="P:cell surface pattern recognition receptor signaling pathway"/>
    <property type="evidence" value="ECO:0000314"/>
    <property type="project" value="ComplexPortal"/>
</dbReference>
<dbReference type="GO" id="GO:0006958">
    <property type="term" value="P:complement activation, classical pathway"/>
    <property type="evidence" value="ECO:0007669"/>
    <property type="project" value="UniProtKB-KW"/>
</dbReference>
<dbReference type="GO" id="GO:0001867">
    <property type="term" value="P:complement activation, lectin pathway"/>
    <property type="evidence" value="ECO:0000314"/>
    <property type="project" value="UniProtKB"/>
</dbReference>
<dbReference type="GO" id="GO:0042742">
    <property type="term" value="P:defense response to bacterium"/>
    <property type="evidence" value="ECO:0000304"/>
    <property type="project" value="BHF-UCL"/>
</dbReference>
<dbReference type="GO" id="GO:0050830">
    <property type="term" value="P:defense response to Gram-positive bacterium"/>
    <property type="evidence" value="ECO:0000314"/>
    <property type="project" value="MGI"/>
</dbReference>
<dbReference type="GO" id="GO:0045087">
    <property type="term" value="P:innate immune response"/>
    <property type="evidence" value="ECO:0000314"/>
    <property type="project" value="BHF-UCL"/>
</dbReference>
<dbReference type="GO" id="GO:0051873">
    <property type="term" value="P:killing by host of symbiont cells"/>
    <property type="evidence" value="ECO:0007669"/>
    <property type="project" value="Ensembl"/>
</dbReference>
<dbReference type="GO" id="GO:0048525">
    <property type="term" value="P:negative regulation of viral process"/>
    <property type="evidence" value="ECO:0000314"/>
    <property type="project" value="BHF-UCL"/>
</dbReference>
<dbReference type="GO" id="GO:0008228">
    <property type="term" value="P:opsonization"/>
    <property type="evidence" value="ECO:0000304"/>
    <property type="project" value="BHF-UCL"/>
</dbReference>
<dbReference type="GO" id="GO:1903028">
    <property type="term" value="P:positive regulation of opsonization"/>
    <property type="evidence" value="ECO:0000314"/>
    <property type="project" value="ComplexPortal"/>
</dbReference>
<dbReference type="GO" id="GO:0050766">
    <property type="term" value="P:positive regulation of phagocytosis"/>
    <property type="evidence" value="ECO:0000318"/>
    <property type="project" value="GO_Central"/>
</dbReference>
<dbReference type="GO" id="GO:0006508">
    <property type="term" value="P:proteolysis"/>
    <property type="evidence" value="ECO:0000314"/>
    <property type="project" value="ComplexPortal"/>
</dbReference>
<dbReference type="GO" id="GO:0006979">
    <property type="term" value="P:response to oxidative stress"/>
    <property type="evidence" value="ECO:0000303"/>
    <property type="project" value="UniProtKB"/>
</dbReference>
<dbReference type="GO" id="GO:0043129">
    <property type="term" value="P:surfactant homeostasis"/>
    <property type="evidence" value="ECO:0000318"/>
    <property type="project" value="GO_Central"/>
</dbReference>
<dbReference type="CDD" id="cd03591">
    <property type="entry name" value="CLECT_collectin_like"/>
    <property type="match status" value="1"/>
</dbReference>
<dbReference type="FunFam" id="3.10.100.10:FF:000088">
    <property type="entry name" value="Mannose-binding protein A"/>
    <property type="match status" value="1"/>
</dbReference>
<dbReference type="Gene3D" id="3.10.100.10">
    <property type="entry name" value="Mannose-Binding Protein A, subunit A"/>
    <property type="match status" value="1"/>
</dbReference>
<dbReference type="InterPro" id="IPR001304">
    <property type="entry name" value="C-type_lectin-like"/>
</dbReference>
<dbReference type="InterPro" id="IPR016186">
    <property type="entry name" value="C-type_lectin-like/link_sf"/>
</dbReference>
<dbReference type="InterPro" id="IPR018378">
    <property type="entry name" value="C-type_lectin_CS"/>
</dbReference>
<dbReference type="InterPro" id="IPR051077">
    <property type="entry name" value="Ca-dependent_lectin"/>
</dbReference>
<dbReference type="InterPro" id="IPR008160">
    <property type="entry name" value="Collagen"/>
</dbReference>
<dbReference type="InterPro" id="IPR033990">
    <property type="entry name" value="Collectin_CTLD"/>
</dbReference>
<dbReference type="InterPro" id="IPR016187">
    <property type="entry name" value="CTDL_fold"/>
</dbReference>
<dbReference type="PANTHER" id="PTHR24024:SF34">
    <property type="entry name" value="MANNOSE-BINDING PROTEIN C"/>
    <property type="match status" value="1"/>
</dbReference>
<dbReference type="PANTHER" id="PTHR24024">
    <property type="entry name" value="PULMONARY SURFACTANT-ASSOCIATED PROTEIN A"/>
    <property type="match status" value="1"/>
</dbReference>
<dbReference type="Pfam" id="PF01391">
    <property type="entry name" value="Collagen"/>
    <property type="match status" value="1"/>
</dbReference>
<dbReference type="Pfam" id="PF00059">
    <property type="entry name" value="Lectin_C"/>
    <property type="match status" value="1"/>
</dbReference>
<dbReference type="SMART" id="SM00034">
    <property type="entry name" value="CLECT"/>
    <property type="match status" value="1"/>
</dbReference>
<dbReference type="SUPFAM" id="SSF56436">
    <property type="entry name" value="C-type lectin-like"/>
    <property type="match status" value="1"/>
</dbReference>
<dbReference type="SUPFAM" id="SSF57944">
    <property type="entry name" value="Triple coiled coil domain of C-type lectins"/>
    <property type="match status" value="1"/>
</dbReference>
<dbReference type="PROSITE" id="PS00615">
    <property type="entry name" value="C_TYPE_LECTIN_1"/>
    <property type="match status" value="1"/>
</dbReference>
<dbReference type="PROSITE" id="PS50041">
    <property type="entry name" value="C_TYPE_LECTIN_2"/>
    <property type="match status" value="1"/>
</dbReference>
<protein>
    <recommendedName>
        <fullName evidence="22">Mannose-binding protein C</fullName>
        <shortName>MBP-C</shortName>
    </recommendedName>
    <alternativeName>
        <fullName>Collectin-1</fullName>
    </alternativeName>
    <alternativeName>
        <fullName>MBP1</fullName>
    </alternativeName>
    <alternativeName>
        <fullName>Mannan-binding protein</fullName>
    </alternativeName>
    <alternativeName>
        <fullName>Mannose-binding lectin</fullName>
    </alternativeName>
</protein>